<reference key="1">
    <citation type="submission" date="2007-03" db="EMBL/GenBank/DDBJ databases">
        <title>Sequencing analysis of Lobularia maritima chloroplast DNA.</title>
        <authorList>
            <person name="Hosouchi T."/>
            <person name="Tsuruoka H."/>
            <person name="Kotani H."/>
        </authorList>
    </citation>
    <scope>NUCLEOTIDE SEQUENCE [LARGE SCALE GENOMIC DNA]</scope>
</reference>
<sequence>MAKGKDVRVTIILECTSCVRNDSKKELAGISRYITQKNRHNTPSRLELRKFCPYCYKHTIHGEIKK</sequence>
<gene>
    <name evidence="1" type="primary">rpl33</name>
</gene>
<protein>
    <recommendedName>
        <fullName evidence="1">Large ribosomal subunit protein bL33c</fullName>
    </recommendedName>
    <alternativeName>
        <fullName evidence="2">50S ribosomal protein L33, chloroplastic</fullName>
    </alternativeName>
</protein>
<organism>
    <name type="scientific">Lobularia maritima</name>
    <name type="common">Sweet alyssum</name>
    <name type="synonym">Alyssum maritimum</name>
    <dbReference type="NCBI Taxonomy" id="226051"/>
    <lineage>
        <taxon>Eukaryota</taxon>
        <taxon>Viridiplantae</taxon>
        <taxon>Streptophyta</taxon>
        <taxon>Embryophyta</taxon>
        <taxon>Tracheophyta</taxon>
        <taxon>Spermatophyta</taxon>
        <taxon>Magnoliopsida</taxon>
        <taxon>eudicotyledons</taxon>
        <taxon>Gunneridae</taxon>
        <taxon>Pentapetalae</taxon>
        <taxon>rosids</taxon>
        <taxon>malvids</taxon>
        <taxon>Brassicales</taxon>
        <taxon>Brassicaceae</taxon>
        <taxon>Anastaticeae</taxon>
        <taxon>Lobularia</taxon>
    </lineage>
</organism>
<dbReference type="EMBL" id="AP009375">
    <property type="protein sequence ID" value="BAF50570.1"/>
    <property type="molecule type" value="Genomic_DNA"/>
</dbReference>
<dbReference type="RefSeq" id="YP_001123746.1">
    <property type="nucleotide sequence ID" value="NC_009274.1"/>
</dbReference>
<dbReference type="GeneID" id="4964838"/>
<dbReference type="GO" id="GO:0009507">
    <property type="term" value="C:chloroplast"/>
    <property type="evidence" value="ECO:0007669"/>
    <property type="project" value="UniProtKB-SubCell"/>
</dbReference>
<dbReference type="GO" id="GO:1990904">
    <property type="term" value="C:ribonucleoprotein complex"/>
    <property type="evidence" value="ECO:0007669"/>
    <property type="project" value="UniProtKB-KW"/>
</dbReference>
<dbReference type="GO" id="GO:0005840">
    <property type="term" value="C:ribosome"/>
    <property type="evidence" value="ECO:0007669"/>
    <property type="project" value="UniProtKB-KW"/>
</dbReference>
<dbReference type="GO" id="GO:0003735">
    <property type="term" value="F:structural constituent of ribosome"/>
    <property type="evidence" value="ECO:0007669"/>
    <property type="project" value="InterPro"/>
</dbReference>
<dbReference type="GO" id="GO:0006412">
    <property type="term" value="P:translation"/>
    <property type="evidence" value="ECO:0007669"/>
    <property type="project" value="UniProtKB-UniRule"/>
</dbReference>
<dbReference type="FunFam" id="2.20.28.120:FF:000004">
    <property type="entry name" value="50S ribosomal protein L33, chloroplastic"/>
    <property type="match status" value="1"/>
</dbReference>
<dbReference type="Gene3D" id="2.20.28.120">
    <property type="entry name" value="Ribosomal protein L33"/>
    <property type="match status" value="1"/>
</dbReference>
<dbReference type="HAMAP" id="MF_00294">
    <property type="entry name" value="Ribosomal_bL33"/>
    <property type="match status" value="1"/>
</dbReference>
<dbReference type="InterPro" id="IPR001705">
    <property type="entry name" value="Ribosomal_bL33"/>
</dbReference>
<dbReference type="InterPro" id="IPR018264">
    <property type="entry name" value="Ribosomal_bL33_CS"/>
</dbReference>
<dbReference type="InterPro" id="IPR038584">
    <property type="entry name" value="Ribosomal_bL33_sf"/>
</dbReference>
<dbReference type="InterPro" id="IPR011332">
    <property type="entry name" value="Ribosomal_zn-bd"/>
</dbReference>
<dbReference type="NCBIfam" id="NF001764">
    <property type="entry name" value="PRK00504.1"/>
    <property type="match status" value="1"/>
</dbReference>
<dbReference type="NCBIfam" id="NF001860">
    <property type="entry name" value="PRK00595.1"/>
    <property type="match status" value="1"/>
</dbReference>
<dbReference type="NCBIfam" id="TIGR01023">
    <property type="entry name" value="rpmG_bact"/>
    <property type="match status" value="1"/>
</dbReference>
<dbReference type="PANTHER" id="PTHR43168">
    <property type="entry name" value="50S RIBOSOMAL PROTEIN L33, CHLOROPLASTIC"/>
    <property type="match status" value="1"/>
</dbReference>
<dbReference type="PANTHER" id="PTHR43168:SF2">
    <property type="entry name" value="LARGE RIBOSOMAL SUBUNIT PROTEIN BL33C"/>
    <property type="match status" value="1"/>
</dbReference>
<dbReference type="Pfam" id="PF00471">
    <property type="entry name" value="Ribosomal_L33"/>
    <property type="match status" value="1"/>
</dbReference>
<dbReference type="SUPFAM" id="SSF57829">
    <property type="entry name" value="Zn-binding ribosomal proteins"/>
    <property type="match status" value="1"/>
</dbReference>
<dbReference type="PROSITE" id="PS00582">
    <property type="entry name" value="RIBOSOMAL_L33"/>
    <property type="match status" value="1"/>
</dbReference>
<keyword id="KW-0150">Chloroplast</keyword>
<keyword id="KW-0934">Plastid</keyword>
<keyword id="KW-0687">Ribonucleoprotein</keyword>
<keyword id="KW-0689">Ribosomal protein</keyword>
<comment type="subcellular location">
    <subcellularLocation>
        <location>Plastid</location>
        <location>Chloroplast</location>
    </subcellularLocation>
</comment>
<comment type="similarity">
    <text evidence="1">Belongs to the bacterial ribosomal protein bL33 family.</text>
</comment>
<evidence type="ECO:0000255" key="1">
    <source>
        <dbReference type="HAMAP-Rule" id="MF_00294"/>
    </source>
</evidence>
<evidence type="ECO:0000305" key="2"/>
<proteinExistence type="inferred from homology"/>
<feature type="chain" id="PRO_0000356811" description="Large ribosomal subunit protein bL33c">
    <location>
        <begin position="1"/>
        <end position="66"/>
    </location>
</feature>
<accession>A4QLL5</accession>
<geneLocation type="chloroplast"/>
<name>RK33_LOBMA</name>